<accession>P08997</accession>
<accession>Q2M6U0</accession>
<reference key="1">
    <citation type="journal article" date="1988" name="Nucleic Acids Res.">
        <title>Nucleotide sequence of the aceB gene encoding malate synthase A in Escherichia coli.</title>
        <authorList>
            <person name="Byrne C.R."/>
            <person name="Stokes H.W."/>
            <person name="Ward K.A."/>
        </authorList>
    </citation>
    <scope>NUCLEOTIDE SEQUENCE [GENOMIC DNA]</scope>
    <source>
        <strain>K12</strain>
    </source>
</reference>
<reference key="2">
    <citation type="journal article" date="1988" name="Nucleic Acids Res.">
        <title>Nucleotide sequence of the aceB gene encoding malate synthase A in Escherichia coli.</title>
        <authorList>
            <person name="Byrne C.R."/>
            <person name="Stokes H.W."/>
            <person name="Ward K.A."/>
        </authorList>
    </citation>
    <scope>NUCLEOTIDE SEQUENCE [GENOMIC DNA]</scope>
</reference>
<reference key="3">
    <citation type="journal article" date="1993" name="Nucleic Acids Res.">
        <title>Analysis of the Escherichia coli genome. IV. DNA sequence of the region from 89.2 to 92.8 minutes.</title>
        <authorList>
            <person name="Blattner F.R."/>
            <person name="Burland V.D."/>
            <person name="Plunkett G. III"/>
            <person name="Sofia H.J."/>
            <person name="Daniels D.L."/>
        </authorList>
    </citation>
    <scope>NUCLEOTIDE SEQUENCE [LARGE SCALE GENOMIC DNA]</scope>
    <source>
        <strain>K12 / MG1655 / ATCC 47076</strain>
    </source>
</reference>
<reference key="4">
    <citation type="journal article" date="1997" name="Science">
        <title>The complete genome sequence of Escherichia coli K-12.</title>
        <authorList>
            <person name="Blattner F.R."/>
            <person name="Plunkett G. III"/>
            <person name="Bloch C.A."/>
            <person name="Perna N.T."/>
            <person name="Burland V."/>
            <person name="Riley M."/>
            <person name="Collado-Vides J."/>
            <person name="Glasner J.D."/>
            <person name="Rode C.K."/>
            <person name="Mayhew G.F."/>
            <person name="Gregor J."/>
            <person name="Davis N.W."/>
            <person name="Kirkpatrick H.A."/>
            <person name="Goeden M.A."/>
            <person name="Rose D.J."/>
            <person name="Mau B."/>
            <person name="Shao Y."/>
        </authorList>
    </citation>
    <scope>NUCLEOTIDE SEQUENCE [LARGE SCALE GENOMIC DNA]</scope>
    <source>
        <strain>K12 / MG1655 / ATCC 47076</strain>
    </source>
</reference>
<reference key="5">
    <citation type="journal article" date="2006" name="Mol. Syst. Biol.">
        <title>Highly accurate genome sequences of Escherichia coli K-12 strains MG1655 and W3110.</title>
        <authorList>
            <person name="Hayashi K."/>
            <person name="Morooka N."/>
            <person name="Yamamoto Y."/>
            <person name="Fujita K."/>
            <person name="Isono K."/>
            <person name="Choi S."/>
            <person name="Ohtsubo E."/>
            <person name="Baba T."/>
            <person name="Wanner B.L."/>
            <person name="Mori H."/>
            <person name="Horiuchi T."/>
        </authorList>
    </citation>
    <scope>NUCLEOTIDE SEQUENCE [LARGE SCALE GENOMIC DNA]</scope>
    <source>
        <strain>K12 / W3110 / ATCC 27325 / DSM 5911</strain>
    </source>
</reference>
<gene>
    <name type="primary">aceB</name>
    <name type="synonym">mas</name>
    <name type="ordered locus">b4014</name>
    <name type="ordered locus">JW3974</name>
</gene>
<protein>
    <recommendedName>
        <fullName>Malate synthase A</fullName>
        <shortName>MSA</shortName>
        <ecNumber>2.3.3.9</ecNumber>
    </recommendedName>
</protein>
<proteinExistence type="evidence at protein level"/>
<comment type="catalytic activity">
    <reaction>
        <text>glyoxylate + acetyl-CoA + H2O = (S)-malate + CoA + H(+)</text>
        <dbReference type="Rhea" id="RHEA:18181"/>
        <dbReference type="ChEBI" id="CHEBI:15377"/>
        <dbReference type="ChEBI" id="CHEBI:15378"/>
        <dbReference type="ChEBI" id="CHEBI:15589"/>
        <dbReference type="ChEBI" id="CHEBI:36655"/>
        <dbReference type="ChEBI" id="CHEBI:57287"/>
        <dbReference type="ChEBI" id="CHEBI:57288"/>
        <dbReference type="EC" id="2.3.3.9"/>
    </reaction>
</comment>
<comment type="pathway">
    <text>Carbohydrate metabolism; glyoxylate cycle; (S)-malate from isocitrate: step 2/2.</text>
</comment>
<comment type="subcellular location">
    <subcellularLocation>
        <location>Cytoplasm</location>
    </subcellularLocation>
</comment>
<comment type="similarity">
    <text evidence="2">Belongs to the malate synthase family.</text>
</comment>
<dbReference type="EC" id="2.3.3.9"/>
<dbReference type="EMBL" id="X12431">
    <property type="protein sequence ID" value="CAA30973.1"/>
    <property type="molecule type" value="Genomic_DNA"/>
</dbReference>
<dbReference type="EMBL" id="U00006">
    <property type="protein sequence ID" value="AAC43108.1"/>
    <property type="molecule type" value="Genomic_DNA"/>
</dbReference>
<dbReference type="EMBL" id="U00096">
    <property type="protein sequence ID" value="AAC76984.1"/>
    <property type="molecule type" value="Genomic_DNA"/>
</dbReference>
<dbReference type="EMBL" id="AP009048">
    <property type="protein sequence ID" value="BAE78016.1"/>
    <property type="molecule type" value="Genomic_DNA"/>
</dbReference>
<dbReference type="PIR" id="A32649">
    <property type="entry name" value="SYECMA"/>
</dbReference>
<dbReference type="RefSeq" id="NP_418438.1">
    <property type="nucleotide sequence ID" value="NC_000913.3"/>
</dbReference>
<dbReference type="RefSeq" id="WP_000138905.1">
    <property type="nucleotide sequence ID" value="NZ_SSZK01000049.1"/>
</dbReference>
<dbReference type="PDB" id="3CUZ">
    <property type="method" value="X-ray"/>
    <property type="resolution" value="1.04 A"/>
    <property type="chains" value="A=2-533"/>
</dbReference>
<dbReference type="PDB" id="3CV1">
    <property type="method" value="X-ray"/>
    <property type="resolution" value="1.68 A"/>
    <property type="chains" value="A=2-533"/>
</dbReference>
<dbReference type="PDB" id="3CV2">
    <property type="method" value="X-ray"/>
    <property type="resolution" value="1.40 A"/>
    <property type="chains" value="A/B=2-533"/>
</dbReference>
<dbReference type="PDBsum" id="3CUZ"/>
<dbReference type="PDBsum" id="3CV1"/>
<dbReference type="PDBsum" id="3CV2"/>
<dbReference type="SMR" id="P08997"/>
<dbReference type="BioGRID" id="4259288">
    <property type="interactions" value="14"/>
</dbReference>
<dbReference type="FunCoup" id="P08997">
    <property type="interactions" value="558"/>
</dbReference>
<dbReference type="IntAct" id="P08997">
    <property type="interactions" value="6"/>
</dbReference>
<dbReference type="STRING" id="511145.b4014"/>
<dbReference type="jPOST" id="P08997"/>
<dbReference type="PaxDb" id="511145-b4014"/>
<dbReference type="EnsemblBacteria" id="AAC76984">
    <property type="protein sequence ID" value="AAC76984"/>
    <property type="gene ID" value="b4014"/>
</dbReference>
<dbReference type="GeneID" id="948512"/>
<dbReference type="KEGG" id="ecj:JW3974"/>
<dbReference type="KEGG" id="eco:b4014"/>
<dbReference type="KEGG" id="ecoc:C3026_21685"/>
<dbReference type="PATRIC" id="fig|1411691.4.peg.2699"/>
<dbReference type="EchoBASE" id="EB0022"/>
<dbReference type="eggNOG" id="COG2225">
    <property type="taxonomic scope" value="Bacteria"/>
</dbReference>
<dbReference type="HOGENOM" id="CLU_018928_3_0_6"/>
<dbReference type="InParanoid" id="P08997"/>
<dbReference type="OMA" id="WHLPERH"/>
<dbReference type="OrthoDB" id="9768429at2"/>
<dbReference type="PhylomeDB" id="P08997"/>
<dbReference type="BioCyc" id="EcoCyc:MALATE-SYNTHASE"/>
<dbReference type="BioCyc" id="MetaCyc:MALATE-SYNTHASE"/>
<dbReference type="UniPathway" id="UPA00703">
    <property type="reaction ID" value="UER00720"/>
</dbReference>
<dbReference type="EvolutionaryTrace" id="P08997"/>
<dbReference type="PRO" id="PR:P08997"/>
<dbReference type="Proteomes" id="UP000000625">
    <property type="component" value="Chromosome"/>
</dbReference>
<dbReference type="GO" id="GO:0005737">
    <property type="term" value="C:cytoplasm"/>
    <property type="evidence" value="ECO:0000314"/>
    <property type="project" value="EcoliWiki"/>
</dbReference>
<dbReference type="GO" id="GO:0004474">
    <property type="term" value="F:malate synthase activity"/>
    <property type="evidence" value="ECO:0000314"/>
    <property type="project" value="EcoCyc"/>
</dbReference>
<dbReference type="GO" id="GO:0006097">
    <property type="term" value="P:glyoxylate cycle"/>
    <property type="evidence" value="ECO:0000318"/>
    <property type="project" value="GO_Central"/>
</dbReference>
<dbReference type="GO" id="GO:0006099">
    <property type="term" value="P:tricarboxylic acid cycle"/>
    <property type="evidence" value="ECO:0007669"/>
    <property type="project" value="UniProtKB-KW"/>
</dbReference>
<dbReference type="CDD" id="cd00727">
    <property type="entry name" value="malate_synt_A"/>
    <property type="match status" value="1"/>
</dbReference>
<dbReference type="FunFam" id="1.20.1220.12:FF:000001">
    <property type="entry name" value="Malate synthase"/>
    <property type="match status" value="1"/>
</dbReference>
<dbReference type="FunFam" id="3.20.20.360:FF:000001">
    <property type="entry name" value="Malate synthase"/>
    <property type="match status" value="1"/>
</dbReference>
<dbReference type="Gene3D" id="3.20.20.360">
    <property type="entry name" value="Malate synthase, domain 3"/>
    <property type="match status" value="1"/>
</dbReference>
<dbReference type="Gene3D" id="1.20.1220.12">
    <property type="entry name" value="Malate synthase, domain III"/>
    <property type="match status" value="1"/>
</dbReference>
<dbReference type="InterPro" id="IPR044856">
    <property type="entry name" value="Malate_synth_C_sf"/>
</dbReference>
<dbReference type="InterPro" id="IPR011076">
    <property type="entry name" value="Malate_synth_sf"/>
</dbReference>
<dbReference type="InterPro" id="IPR006252">
    <property type="entry name" value="Malate_synthA"/>
</dbReference>
<dbReference type="InterPro" id="IPR019830">
    <property type="entry name" value="Malate_synthase_CS"/>
</dbReference>
<dbReference type="InterPro" id="IPR001465">
    <property type="entry name" value="Malate_synthase_TIM"/>
</dbReference>
<dbReference type="InterPro" id="IPR048355">
    <property type="entry name" value="MS_C"/>
</dbReference>
<dbReference type="InterPro" id="IPR048356">
    <property type="entry name" value="MS_N"/>
</dbReference>
<dbReference type="InterPro" id="IPR046363">
    <property type="entry name" value="MS_N_TIM-barrel_dom"/>
</dbReference>
<dbReference type="NCBIfam" id="TIGR01344">
    <property type="entry name" value="malate_syn_A"/>
    <property type="match status" value="1"/>
</dbReference>
<dbReference type="PANTHER" id="PTHR42902">
    <property type="entry name" value="MALATE SYNTHASE"/>
    <property type="match status" value="1"/>
</dbReference>
<dbReference type="PANTHER" id="PTHR42902:SF1">
    <property type="entry name" value="MALATE SYNTHASE 1-RELATED"/>
    <property type="match status" value="1"/>
</dbReference>
<dbReference type="Pfam" id="PF20659">
    <property type="entry name" value="MS_C"/>
    <property type="match status" value="1"/>
</dbReference>
<dbReference type="Pfam" id="PF20656">
    <property type="entry name" value="MS_N"/>
    <property type="match status" value="1"/>
</dbReference>
<dbReference type="Pfam" id="PF01274">
    <property type="entry name" value="MS_TIM-barrel"/>
    <property type="match status" value="1"/>
</dbReference>
<dbReference type="PIRSF" id="PIRSF001363">
    <property type="entry name" value="Malate_synth"/>
    <property type="match status" value="1"/>
</dbReference>
<dbReference type="SUPFAM" id="SSF51645">
    <property type="entry name" value="Malate synthase G"/>
    <property type="match status" value="1"/>
</dbReference>
<dbReference type="PROSITE" id="PS00510">
    <property type="entry name" value="MALATE_SYNTHASE"/>
    <property type="match status" value="1"/>
</dbReference>
<name>MASY_ECOLI</name>
<sequence>MTEQATTTDELAFTRPYGEQEKQILTAEAVEFLTELVTHFTPQRNKLLAARIQQQQDIDNGTLPDFISETASIRDADWKIRGIPADLEDRRVEITGPVERKMVINALNANVKVFMADFEDSLAPDWNKVIDGQINLRDAVNGTISYTNEAGKIYQLKPNPAVLICRVRGLHLPEKHVTWRGEAIPGSLFDFALYFFHNYQALLAKGSGPYFYLPKTQSWQEAAWWSEVFSYAEDRFNLPRGTIKATLLIETLPAVFQMDEILHALRDHIVGLNCGRWDYIFSYIKTLKNYPDRVLPDRQAVTMDKPFLNAYSRLLIKTCHKRGAFAMGGMAAFIPSKDEEHNNQVLNKVKADKSLEANNGHDGTWIAHPGLADTAMAVFNDILGSRKNQLEVMREQDAPITADQLLAPCDGERTEEGMRANIRVAVQYIEAWISGNGCVPIYGLMEDAATAEISRTSIWQWIHHQKTLSNGKPVTKALFRQMLGEEMKVIASELGEERFSQGRFDDAARLMEQITTSDELIDFLTLPGYRLLA</sequence>
<organism>
    <name type="scientific">Escherichia coli (strain K12)</name>
    <dbReference type="NCBI Taxonomy" id="83333"/>
    <lineage>
        <taxon>Bacteria</taxon>
        <taxon>Pseudomonadati</taxon>
        <taxon>Pseudomonadota</taxon>
        <taxon>Gammaproteobacteria</taxon>
        <taxon>Enterobacterales</taxon>
        <taxon>Enterobacteriaceae</taxon>
        <taxon>Escherichia</taxon>
    </lineage>
</organism>
<evidence type="ECO:0000250" key="1"/>
<evidence type="ECO:0000305" key="2"/>
<evidence type="ECO:0007829" key="3">
    <source>
        <dbReference type="PDB" id="3CUZ"/>
    </source>
</evidence>
<evidence type="ECO:0007829" key="4">
    <source>
        <dbReference type="PDB" id="3CV2"/>
    </source>
</evidence>
<keyword id="KW-0002">3D-structure</keyword>
<keyword id="KW-0963">Cytoplasm</keyword>
<keyword id="KW-0329">Glyoxylate bypass</keyword>
<keyword id="KW-1185">Reference proteome</keyword>
<keyword id="KW-0808">Transferase</keyword>
<keyword id="KW-0816">Tricarboxylic acid cycle</keyword>
<feature type="chain" id="PRO_0000166875" description="Malate synthase A">
    <location>
        <begin position="1"/>
        <end position="533"/>
    </location>
</feature>
<feature type="active site" description="Proton acceptor" evidence="1">
    <location>
        <position position="166"/>
    </location>
</feature>
<feature type="active site" description="Proton donor" evidence="1">
    <location>
        <position position="447"/>
    </location>
</feature>
<feature type="strand" evidence="4">
    <location>
        <begin position="12"/>
        <end position="15"/>
    </location>
</feature>
<feature type="helix" evidence="3">
    <location>
        <begin position="19"/>
        <end position="24"/>
    </location>
</feature>
<feature type="helix" evidence="3">
    <location>
        <begin position="27"/>
        <end position="59"/>
    </location>
</feature>
<feature type="helix" evidence="3">
    <location>
        <begin position="71"/>
        <end position="74"/>
    </location>
</feature>
<feature type="helix" evidence="3">
    <location>
        <begin position="85"/>
        <end position="87"/>
    </location>
</feature>
<feature type="strand" evidence="3">
    <location>
        <begin position="91"/>
        <end position="97"/>
    </location>
</feature>
<feature type="helix" evidence="3">
    <location>
        <begin position="100"/>
        <end position="107"/>
    </location>
</feature>
<feature type="strand" evidence="3">
    <location>
        <begin position="109"/>
        <end position="119"/>
    </location>
</feature>
<feature type="helix" evidence="3">
    <location>
        <begin position="126"/>
        <end position="140"/>
    </location>
</feature>
<feature type="strand" evidence="3">
    <location>
        <begin position="145"/>
        <end position="147"/>
    </location>
</feature>
<feature type="strand" evidence="3">
    <location>
        <begin position="153"/>
        <end position="155"/>
    </location>
</feature>
<feature type="strand" evidence="3">
    <location>
        <begin position="162"/>
        <end position="166"/>
    </location>
</feature>
<feature type="strand" evidence="3">
    <location>
        <begin position="173"/>
        <end position="179"/>
    </location>
</feature>
<feature type="strand" evidence="3">
    <location>
        <begin position="182"/>
        <end position="185"/>
    </location>
</feature>
<feature type="helix" evidence="3">
    <location>
        <begin position="186"/>
        <end position="204"/>
    </location>
</feature>
<feature type="strand" evidence="3">
    <location>
        <begin position="210"/>
        <end position="213"/>
    </location>
</feature>
<feature type="helix" evidence="3">
    <location>
        <begin position="219"/>
        <end position="235"/>
    </location>
</feature>
<feature type="strand" evidence="3">
    <location>
        <begin position="243"/>
        <end position="248"/>
    </location>
</feature>
<feature type="helix" evidence="3">
    <location>
        <begin position="252"/>
        <end position="255"/>
    </location>
</feature>
<feature type="helix" evidence="3">
    <location>
        <begin position="258"/>
        <end position="264"/>
    </location>
</feature>
<feature type="turn" evidence="3">
    <location>
        <begin position="265"/>
        <end position="268"/>
    </location>
</feature>
<feature type="strand" evidence="3">
    <location>
        <begin position="269"/>
        <end position="273"/>
    </location>
</feature>
<feature type="helix" evidence="3">
    <location>
        <begin position="277"/>
        <end position="286"/>
    </location>
</feature>
<feature type="turn" evidence="3">
    <location>
        <begin position="287"/>
        <end position="289"/>
    </location>
</feature>
<feature type="helix" evidence="3">
    <location>
        <begin position="291"/>
        <end position="293"/>
    </location>
</feature>
<feature type="helix" evidence="3">
    <location>
        <begin position="298"/>
        <end position="300"/>
    </location>
</feature>
<feature type="helix" evidence="3">
    <location>
        <begin position="306"/>
        <end position="321"/>
    </location>
</feature>
<feature type="strand" evidence="3">
    <location>
        <begin position="325"/>
        <end position="331"/>
    </location>
</feature>
<feature type="helix" evidence="3">
    <location>
        <begin position="339"/>
        <end position="341"/>
    </location>
</feature>
<feature type="helix" evidence="3">
    <location>
        <begin position="343"/>
        <end position="359"/>
    </location>
</feature>
<feature type="strand" evidence="3">
    <location>
        <begin position="362"/>
        <end position="368"/>
    </location>
</feature>
<feature type="helix" evidence="3">
    <location>
        <begin position="369"/>
        <end position="371"/>
    </location>
</feature>
<feature type="helix" evidence="3">
    <location>
        <begin position="372"/>
        <end position="383"/>
    </location>
</feature>
<feature type="helix" evidence="3">
    <location>
        <begin position="402"/>
        <end position="406"/>
    </location>
</feature>
<feature type="helix" evidence="3">
    <location>
        <begin position="415"/>
        <end position="433"/>
    </location>
</feature>
<feature type="strand" evidence="3">
    <location>
        <begin position="438"/>
        <end position="441"/>
    </location>
</feature>
<feature type="strand" evidence="3">
    <location>
        <begin position="444"/>
        <end position="446"/>
    </location>
</feature>
<feature type="helix" evidence="3">
    <location>
        <begin position="448"/>
        <end position="463"/>
    </location>
</feature>
<feature type="helix" evidence="3">
    <location>
        <begin position="476"/>
        <end position="494"/>
    </location>
</feature>
<feature type="helix" evidence="3">
    <location>
        <begin position="496"/>
        <end position="501"/>
    </location>
</feature>
<feature type="helix" evidence="3">
    <location>
        <begin position="504"/>
        <end position="516"/>
    </location>
</feature>
<feature type="helix" evidence="3">
    <location>
        <begin position="525"/>
        <end position="529"/>
    </location>
</feature>